<dbReference type="EMBL" id="BX571856">
    <property type="protein sequence ID" value="CAG41159.1"/>
    <property type="molecule type" value="Genomic_DNA"/>
</dbReference>
<dbReference type="RefSeq" id="WP_000730708.1">
    <property type="nucleotide sequence ID" value="NC_002952.2"/>
</dbReference>
<dbReference type="SMR" id="Q6GEY5"/>
<dbReference type="KEGG" id="sar:SAR2179"/>
<dbReference type="HOGENOM" id="CLU_036138_5_2_9"/>
<dbReference type="Proteomes" id="UP000000596">
    <property type="component" value="Chromosome"/>
</dbReference>
<dbReference type="GO" id="GO:0005886">
    <property type="term" value="C:plasma membrane"/>
    <property type="evidence" value="ECO:0007669"/>
    <property type="project" value="UniProtKB-SubCell"/>
</dbReference>
<dbReference type="GO" id="GO:0032977">
    <property type="term" value="F:membrane insertase activity"/>
    <property type="evidence" value="ECO:0007669"/>
    <property type="project" value="InterPro"/>
</dbReference>
<dbReference type="GO" id="GO:0051205">
    <property type="term" value="P:protein insertion into membrane"/>
    <property type="evidence" value="ECO:0007669"/>
    <property type="project" value="TreeGrafter"/>
</dbReference>
<dbReference type="GO" id="GO:0015031">
    <property type="term" value="P:protein transport"/>
    <property type="evidence" value="ECO:0007669"/>
    <property type="project" value="UniProtKB-KW"/>
</dbReference>
<dbReference type="CDD" id="cd20070">
    <property type="entry name" value="5TM_YidC_Alb3"/>
    <property type="match status" value="1"/>
</dbReference>
<dbReference type="HAMAP" id="MF_01811">
    <property type="entry name" value="YidC_type2"/>
    <property type="match status" value="1"/>
</dbReference>
<dbReference type="InterPro" id="IPR001708">
    <property type="entry name" value="YidC/ALB3/OXA1/COX18"/>
</dbReference>
<dbReference type="InterPro" id="IPR028055">
    <property type="entry name" value="YidC/Oxa/ALB_C"/>
</dbReference>
<dbReference type="InterPro" id="IPR023060">
    <property type="entry name" value="YidC/YidC1/YidC2_Firmicutes"/>
</dbReference>
<dbReference type="InterPro" id="IPR047196">
    <property type="entry name" value="YidC_ALB_C"/>
</dbReference>
<dbReference type="NCBIfam" id="TIGR03592">
    <property type="entry name" value="yidC_oxa1_cterm"/>
    <property type="match status" value="1"/>
</dbReference>
<dbReference type="PANTHER" id="PTHR12428:SF65">
    <property type="entry name" value="CYTOCHROME C OXIDASE ASSEMBLY PROTEIN COX18, MITOCHONDRIAL"/>
    <property type="match status" value="1"/>
</dbReference>
<dbReference type="PANTHER" id="PTHR12428">
    <property type="entry name" value="OXA1"/>
    <property type="match status" value="1"/>
</dbReference>
<dbReference type="Pfam" id="PF02096">
    <property type="entry name" value="60KD_IMP"/>
    <property type="match status" value="1"/>
</dbReference>
<dbReference type="PRINTS" id="PR00701">
    <property type="entry name" value="60KDINNERMP"/>
</dbReference>
<dbReference type="PROSITE" id="PS51257">
    <property type="entry name" value="PROKAR_LIPOPROTEIN"/>
    <property type="match status" value="1"/>
</dbReference>
<sequence length="290" mass="33611">MKKKTLLPLFLGIMVFLAGCDYSKPEKRSGFFYNTFVDPMKNVLDWLGNNLLNDNYGLAIIILVLVIRIILLPFMLSNYKNSHMMRQKMKVAKPEVEKIQEKVKRARTQEEKMAANQELMQVYKKYDMNPIKSMLGCLPMLIQLPIIMGLYFVLKDQLVDGLFKYPHFLWFDLGRPDIWITIIAGVLYFIQAYVSSKTMPDEQRQMGYMMMVISPIMIIWISLSSASALGLYWSVSAAFLVVQTHFANIYYEKVAKKEVQPFIEAYEREHNGGSNKKGKNTQVVSKKKKK</sequence>
<proteinExistence type="inferred from homology"/>
<accession>Q6GEY5</accession>
<protein>
    <recommendedName>
        <fullName evidence="1">Membrane protein insertase YidC</fullName>
    </recommendedName>
    <alternativeName>
        <fullName evidence="1">Foldase YidC</fullName>
    </alternativeName>
    <alternativeName>
        <fullName evidence="1">Membrane integrase YidC</fullName>
    </alternativeName>
    <alternativeName>
        <fullName evidence="1">Membrane protein YidC</fullName>
    </alternativeName>
</protein>
<gene>
    <name evidence="1" type="primary">yidC</name>
    <name type="ordered locus">SAR2179</name>
</gene>
<reference key="1">
    <citation type="journal article" date="2004" name="Proc. Natl. Acad. Sci. U.S.A.">
        <title>Complete genomes of two clinical Staphylococcus aureus strains: evidence for the rapid evolution of virulence and drug resistance.</title>
        <authorList>
            <person name="Holden M.T.G."/>
            <person name="Feil E.J."/>
            <person name="Lindsay J.A."/>
            <person name="Peacock S.J."/>
            <person name="Day N.P.J."/>
            <person name="Enright M.C."/>
            <person name="Foster T.J."/>
            <person name="Moore C.E."/>
            <person name="Hurst L."/>
            <person name="Atkin R."/>
            <person name="Barron A."/>
            <person name="Bason N."/>
            <person name="Bentley S.D."/>
            <person name="Chillingworth C."/>
            <person name="Chillingworth T."/>
            <person name="Churcher C."/>
            <person name="Clark L."/>
            <person name="Corton C."/>
            <person name="Cronin A."/>
            <person name="Doggett J."/>
            <person name="Dowd L."/>
            <person name="Feltwell T."/>
            <person name="Hance Z."/>
            <person name="Harris B."/>
            <person name="Hauser H."/>
            <person name="Holroyd S."/>
            <person name="Jagels K."/>
            <person name="James K.D."/>
            <person name="Lennard N."/>
            <person name="Line A."/>
            <person name="Mayes R."/>
            <person name="Moule S."/>
            <person name="Mungall K."/>
            <person name="Ormond D."/>
            <person name="Quail M.A."/>
            <person name="Rabbinowitsch E."/>
            <person name="Rutherford K.M."/>
            <person name="Sanders M."/>
            <person name="Sharp S."/>
            <person name="Simmonds M."/>
            <person name="Stevens K."/>
            <person name="Whitehead S."/>
            <person name="Barrell B.G."/>
            <person name="Spratt B.G."/>
            <person name="Parkhill J."/>
        </authorList>
    </citation>
    <scope>NUCLEOTIDE SEQUENCE [LARGE SCALE GENOMIC DNA]</scope>
    <source>
        <strain>MRSA252</strain>
    </source>
</reference>
<feature type="signal peptide" evidence="1">
    <location>
        <begin position="1"/>
        <end position="19"/>
    </location>
</feature>
<feature type="chain" id="PRO_0000020394" description="Membrane protein insertase YidC">
    <location>
        <begin position="20"/>
        <end position="290"/>
    </location>
</feature>
<feature type="transmembrane region" description="Helical" evidence="1">
    <location>
        <begin position="56"/>
        <end position="76"/>
    </location>
</feature>
<feature type="transmembrane region" description="Helical" evidence="1">
    <location>
        <begin position="134"/>
        <end position="154"/>
    </location>
</feature>
<feature type="transmembrane region" description="Helical" evidence="1">
    <location>
        <begin position="176"/>
        <end position="196"/>
    </location>
</feature>
<feature type="transmembrane region" description="Helical" evidence="1">
    <location>
        <begin position="207"/>
        <end position="224"/>
    </location>
</feature>
<feature type="transmembrane region" description="Helical" evidence="1">
    <location>
        <begin position="229"/>
        <end position="251"/>
    </location>
</feature>
<feature type="region of interest" description="Disordered" evidence="2">
    <location>
        <begin position="270"/>
        <end position="290"/>
    </location>
</feature>
<feature type="lipid moiety-binding region" description="N-palmitoyl cysteine" evidence="1">
    <location>
        <position position="20"/>
    </location>
</feature>
<feature type="lipid moiety-binding region" description="S-diacylglycerol cysteine" evidence="1">
    <location>
        <position position="20"/>
    </location>
</feature>
<name>YIDC_STAAR</name>
<keyword id="KW-1003">Cell membrane</keyword>
<keyword id="KW-0143">Chaperone</keyword>
<keyword id="KW-0449">Lipoprotein</keyword>
<keyword id="KW-0472">Membrane</keyword>
<keyword id="KW-0564">Palmitate</keyword>
<keyword id="KW-0653">Protein transport</keyword>
<keyword id="KW-0732">Signal</keyword>
<keyword id="KW-0812">Transmembrane</keyword>
<keyword id="KW-1133">Transmembrane helix</keyword>
<keyword id="KW-0813">Transport</keyword>
<evidence type="ECO:0000255" key="1">
    <source>
        <dbReference type="HAMAP-Rule" id="MF_01811"/>
    </source>
</evidence>
<evidence type="ECO:0000256" key="2">
    <source>
        <dbReference type="SAM" id="MobiDB-lite"/>
    </source>
</evidence>
<comment type="function">
    <text evidence="1">Required for the insertion and/or proper folding and/or complex formation of integral membrane proteins into the membrane. Involved in integration of membrane proteins that insert both dependently and independently of the Sec translocase complex, as well as at least some lipoproteins.</text>
</comment>
<comment type="subcellular location">
    <subcellularLocation>
        <location evidence="1">Cell membrane</location>
        <topology evidence="1">Multi-pass membrane protein</topology>
    </subcellularLocation>
</comment>
<comment type="similarity">
    <text evidence="1">Belongs to the OXA1/ALB3/YidC family. Type 2 subfamily.</text>
</comment>
<organism>
    <name type="scientific">Staphylococcus aureus (strain MRSA252)</name>
    <dbReference type="NCBI Taxonomy" id="282458"/>
    <lineage>
        <taxon>Bacteria</taxon>
        <taxon>Bacillati</taxon>
        <taxon>Bacillota</taxon>
        <taxon>Bacilli</taxon>
        <taxon>Bacillales</taxon>
        <taxon>Staphylococcaceae</taxon>
        <taxon>Staphylococcus</taxon>
    </lineage>
</organism>